<protein>
    <recommendedName>
        <fullName>Phosphatidylinositol/phosphatidylcholine transfer protein SFH4</fullName>
    </recommendedName>
    <alternativeName>
        <fullName>Protein SEC FOURTEEN HOMOLOGS 4</fullName>
        <shortName>AtSFH4</shortName>
    </alternativeName>
</protein>
<proteinExistence type="evidence at transcript level"/>
<organism>
    <name type="scientific">Arabidopsis thaliana</name>
    <name type="common">Mouse-ear cress</name>
    <dbReference type="NCBI Taxonomy" id="3702"/>
    <lineage>
        <taxon>Eukaryota</taxon>
        <taxon>Viridiplantae</taxon>
        <taxon>Streptophyta</taxon>
        <taxon>Embryophyta</taxon>
        <taxon>Tracheophyta</taxon>
        <taxon>Spermatophyta</taxon>
        <taxon>Magnoliopsida</taxon>
        <taxon>eudicotyledons</taxon>
        <taxon>Gunneridae</taxon>
        <taxon>Pentapetalae</taxon>
        <taxon>rosids</taxon>
        <taxon>malvids</taxon>
        <taxon>Brassicales</taxon>
        <taxon>Brassicaceae</taxon>
        <taxon>Camelineae</taxon>
        <taxon>Arabidopsis</taxon>
    </lineage>
</organism>
<evidence type="ECO:0000250" key="1"/>
<evidence type="ECO:0000255" key="2"/>
<evidence type="ECO:0000255" key="3">
    <source>
        <dbReference type="PROSITE-ProRule" id="PRU00056"/>
    </source>
</evidence>
<evidence type="ECO:0000256" key="4">
    <source>
        <dbReference type="SAM" id="MobiDB-lite"/>
    </source>
</evidence>
<evidence type="ECO:0000305" key="5"/>
<comment type="function">
    <text evidence="1">Required for transport of secretory proteins from the Golgi complex. Catalyzes the transfer of phosphatidylinositol and phosphatidylcholine between membranes in vitro (By similarity).</text>
</comment>
<comment type="subcellular location">
    <subcellularLocation>
        <location evidence="1">Golgi apparatus membrane</location>
        <topology evidence="1">Peripheral membrane protein</topology>
    </subcellularLocation>
    <subcellularLocation>
        <location evidence="1">Cell membrane</location>
        <topology evidence="1">Peripheral membrane protein</topology>
    </subcellularLocation>
</comment>
<comment type="alternative products">
    <event type="alternative splicing"/>
    <isoform>
        <id>F4HP88-1</id>
        <name>1</name>
        <sequence type="displayed"/>
    </isoform>
    <text>A number of isoforms are produced. According to EST sequences.</text>
</comment>
<comment type="similarity">
    <text evidence="5">Belongs to the SFH family.</text>
</comment>
<comment type="sequence caution" evidence="5">
    <conflict type="erroneous gene model prediction">
        <sequence resource="EMBL-CDS" id="AAF98408"/>
    </conflict>
</comment>
<reference key="1">
    <citation type="journal article" date="2000" name="Nature">
        <title>Sequence and analysis of chromosome 1 of the plant Arabidopsis thaliana.</title>
        <authorList>
            <person name="Theologis A."/>
            <person name="Ecker J.R."/>
            <person name="Palm C.J."/>
            <person name="Federspiel N.A."/>
            <person name="Kaul S."/>
            <person name="White O."/>
            <person name="Alonso J."/>
            <person name="Altafi H."/>
            <person name="Araujo R."/>
            <person name="Bowman C.L."/>
            <person name="Brooks S.Y."/>
            <person name="Buehler E."/>
            <person name="Chan A."/>
            <person name="Chao Q."/>
            <person name="Chen H."/>
            <person name="Cheuk R.F."/>
            <person name="Chin C.W."/>
            <person name="Chung M.K."/>
            <person name="Conn L."/>
            <person name="Conway A.B."/>
            <person name="Conway A.R."/>
            <person name="Creasy T.H."/>
            <person name="Dewar K."/>
            <person name="Dunn P."/>
            <person name="Etgu P."/>
            <person name="Feldblyum T.V."/>
            <person name="Feng J.-D."/>
            <person name="Fong B."/>
            <person name="Fujii C.Y."/>
            <person name="Gill J.E."/>
            <person name="Goldsmith A.D."/>
            <person name="Haas B."/>
            <person name="Hansen N.F."/>
            <person name="Hughes B."/>
            <person name="Huizar L."/>
            <person name="Hunter J.L."/>
            <person name="Jenkins J."/>
            <person name="Johnson-Hopson C."/>
            <person name="Khan S."/>
            <person name="Khaykin E."/>
            <person name="Kim C.J."/>
            <person name="Koo H.L."/>
            <person name="Kremenetskaia I."/>
            <person name="Kurtz D.B."/>
            <person name="Kwan A."/>
            <person name="Lam B."/>
            <person name="Langin-Hooper S."/>
            <person name="Lee A."/>
            <person name="Lee J.M."/>
            <person name="Lenz C.A."/>
            <person name="Li J.H."/>
            <person name="Li Y.-P."/>
            <person name="Lin X."/>
            <person name="Liu S.X."/>
            <person name="Liu Z.A."/>
            <person name="Luros J.S."/>
            <person name="Maiti R."/>
            <person name="Marziali A."/>
            <person name="Militscher J."/>
            <person name="Miranda M."/>
            <person name="Nguyen M."/>
            <person name="Nierman W.C."/>
            <person name="Osborne B.I."/>
            <person name="Pai G."/>
            <person name="Peterson J."/>
            <person name="Pham P.K."/>
            <person name="Rizzo M."/>
            <person name="Rooney T."/>
            <person name="Rowley D."/>
            <person name="Sakano H."/>
            <person name="Salzberg S.L."/>
            <person name="Schwartz J.R."/>
            <person name="Shinn P."/>
            <person name="Southwick A.M."/>
            <person name="Sun H."/>
            <person name="Tallon L.J."/>
            <person name="Tambunga G."/>
            <person name="Toriumi M.J."/>
            <person name="Town C.D."/>
            <person name="Utterback T."/>
            <person name="Van Aken S."/>
            <person name="Vaysberg M."/>
            <person name="Vysotskaia V.S."/>
            <person name="Walker M."/>
            <person name="Wu D."/>
            <person name="Yu G."/>
            <person name="Fraser C.M."/>
            <person name="Venter J.C."/>
            <person name="Davis R.W."/>
        </authorList>
    </citation>
    <scope>NUCLEOTIDE SEQUENCE [LARGE SCALE GENOMIC DNA]</scope>
    <source>
        <strain>cv. Columbia</strain>
    </source>
</reference>
<reference key="2">
    <citation type="journal article" date="2017" name="Plant J.">
        <title>Araport11: a complete reannotation of the Arabidopsis thaliana reference genome.</title>
        <authorList>
            <person name="Cheng C.Y."/>
            <person name="Krishnakumar V."/>
            <person name="Chan A.P."/>
            <person name="Thibaud-Nissen F."/>
            <person name="Schobel S."/>
            <person name="Town C.D."/>
        </authorList>
    </citation>
    <scope>GENOME REANNOTATION</scope>
    <source>
        <strain>cv. Columbia</strain>
    </source>
</reference>
<reference key="3">
    <citation type="journal article" date="2003" name="Science">
        <title>Empirical analysis of transcriptional activity in the Arabidopsis genome.</title>
        <authorList>
            <person name="Yamada K."/>
            <person name="Lim J."/>
            <person name="Dale J.M."/>
            <person name="Chen H."/>
            <person name="Shinn P."/>
            <person name="Palm C.J."/>
            <person name="Southwick A.M."/>
            <person name="Wu H.C."/>
            <person name="Kim C.J."/>
            <person name="Nguyen M."/>
            <person name="Pham P.K."/>
            <person name="Cheuk R.F."/>
            <person name="Karlin-Newmann G."/>
            <person name="Liu S.X."/>
            <person name="Lam B."/>
            <person name="Sakano H."/>
            <person name="Wu T."/>
            <person name="Yu G."/>
            <person name="Miranda M."/>
            <person name="Quach H.L."/>
            <person name="Tripp M."/>
            <person name="Chang C.H."/>
            <person name="Lee J.M."/>
            <person name="Toriumi M.J."/>
            <person name="Chan M.M."/>
            <person name="Tang C.C."/>
            <person name="Onodera C.S."/>
            <person name="Deng J.M."/>
            <person name="Akiyama K."/>
            <person name="Ansari Y."/>
            <person name="Arakawa T."/>
            <person name="Banh J."/>
            <person name="Banno F."/>
            <person name="Bowser L."/>
            <person name="Brooks S.Y."/>
            <person name="Carninci P."/>
            <person name="Chao Q."/>
            <person name="Choy N."/>
            <person name="Enju A."/>
            <person name="Goldsmith A.D."/>
            <person name="Gurjal M."/>
            <person name="Hansen N.F."/>
            <person name="Hayashizaki Y."/>
            <person name="Johnson-Hopson C."/>
            <person name="Hsuan V.W."/>
            <person name="Iida K."/>
            <person name="Karnes M."/>
            <person name="Khan S."/>
            <person name="Koesema E."/>
            <person name="Ishida J."/>
            <person name="Jiang P.X."/>
            <person name="Jones T."/>
            <person name="Kawai J."/>
            <person name="Kamiya A."/>
            <person name="Meyers C."/>
            <person name="Nakajima M."/>
            <person name="Narusaka M."/>
            <person name="Seki M."/>
            <person name="Sakurai T."/>
            <person name="Satou M."/>
            <person name="Tamse R."/>
            <person name="Vaysberg M."/>
            <person name="Wallender E.K."/>
            <person name="Wong C."/>
            <person name="Yamamura Y."/>
            <person name="Yuan S."/>
            <person name="Shinozaki K."/>
            <person name="Davis R.W."/>
            <person name="Theologis A."/>
            <person name="Ecker J.R."/>
        </authorList>
    </citation>
    <scope>NUCLEOTIDE SEQUENCE [LARGE SCALE MRNA]</scope>
    <source>
        <strain>cv. Columbia</strain>
    </source>
</reference>
<reference key="4">
    <citation type="submission" date="2005-03" db="EMBL/GenBank/DDBJ databases">
        <title>Large-scale analysis of RIKEN Arabidopsis full-length (RAFL) cDNAs.</title>
        <authorList>
            <person name="Totoki Y."/>
            <person name="Seki M."/>
            <person name="Ishida J."/>
            <person name="Nakajima M."/>
            <person name="Enju A."/>
            <person name="Kamiya A."/>
            <person name="Narusaka M."/>
            <person name="Shin-i T."/>
            <person name="Nakagawa M."/>
            <person name="Sakamoto N."/>
            <person name="Oishi K."/>
            <person name="Kohara Y."/>
            <person name="Kobayashi M."/>
            <person name="Toyoda A."/>
            <person name="Sakaki Y."/>
            <person name="Sakurai T."/>
            <person name="Iida K."/>
            <person name="Akiyama K."/>
            <person name="Satou M."/>
            <person name="Toyoda T."/>
            <person name="Konagaya A."/>
            <person name="Carninci P."/>
            <person name="Kawai J."/>
            <person name="Hayashizaki Y."/>
            <person name="Shinozaki K."/>
        </authorList>
    </citation>
    <scope>NUCLEOTIDE SEQUENCE [LARGE SCALE MRNA] OF 325-608</scope>
    <source>
        <strain>cv. Columbia</strain>
    </source>
</reference>
<reference key="5">
    <citation type="journal article" date="2005" name="J. Cell Biol.">
        <title>A Sec14p-nodulin domain phosphatidylinositol transfer protein polarizes membrane growth of Arabidopsis thaliana root hairs.</title>
        <authorList>
            <person name="Vincent P."/>
            <person name="Chua M."/>
            <person name="Nogue F."/>
            <person name="Fairbrother A."/>
            <person name="Mekeel H."/>
            <person name="Xu Y."/>
            <person name="Allen N."/>
            <person name="Bibikova T.N."/>
            <person name="Gilroy S."/>
            <person name="Bankaitis V.A."/>
        </authorList>
    </citation>
    <scope>GENE FAMILY</scope>
</reference>
<reference key="6">
    <citation type="journal article" date="2006" name="Nat. Chem. Biol.">
        <title>Phosphatidylinositol transfer proteins and cellular nanoreactors for lipid signaling.</title>
        <authorList>
            <person name="Ile K.E."/>
            <person name="Schaaf G."/>
            <person name="Bankaitis V.A."/>
        </authorList>
    </citation>
    <scope>REVIEW</scope>
</reference>
<accession>F4HP88</accession>
<accession>Q56WM1</accession>
<accession>Q93ZU8</accession>
<accession>Q9FWR9</accession>
<keyword id="KW-0025">Alternative splicing</keyword>
<keyword id="KW-1003">Cell membrane</keyword>
<keyword id="KW-0175">Coiled coil</keyword>
<keyword id="KW-0333">Golgi apparatus</keyword>
<keyword id="KW-0472">Membrane</keyword>
<keyword id="KW-0653">Protein transport</keyword>
<keyword id="KW-1185">Reference proteome</keyword>
<keyword id="KW-0813">Transport</keyword>
<name>SFH4_ARATH</name>
<gene>
    <name type="primary">SFH4</name>
    <name type="ordered locus">At1g19650</name>
    <name type="ORF">F14P1.2</name>
</gene>
<feature type="chain" id="PRO_0000423464" description="Phosphatidylinositol/phosphatidylcholine transfer protein SFH4">
    <location>
        <begin position="1"/>
        <end position="608"/>
    </location>
</feature>
<feature type="domain" description="CRAL-TRIO" evidence="3">
    <location>
        <begin position="146"/>
        <end position="320"/>
    </location>
</feature>
<feature type="region of interest" description="Disordered" evidence="4">
    <location>
        <begin position="1"/>
        <end position="33"/>
    </location>
</feature>
<feature type="region of interest" description="Disordered" evidence="4">
    <location>
        <begin position="358"/>
        <end position="403"/>
    </location>
</feature>
<feature type="coiled-coil region" evidence="2">
    <location>
        <begin position="526"/>
        <end position="572"/>
    </location>
</feature>
<feature type="compositionally biased region" description="Basic and acidic residues" evidence="4">
    <location>
        <begin position="17"/>
        <end position="33"/>
    </location>
</feature>
<feature type="compositionally biased region" description="Polar residues" evidence="4">
    <location>
        <begin position="371"/>
        <end position="381"/>
    </location>
</feature>
<feature type="sequence conflict" description="In Ref. 3; AAL07100." evidence="5" ref="3">
    <original>S</original>
    <variation>T</variation>
    <location>
        <position position="356"/>
    </location>
</feature>
<feature type="sequence conflict" description="In Ref. 4; BAD94680." evidence="5" ref="4">
    <original>S</original>
    <variation>C</variation>
    <location>
        <position position="531"/>
    </location>
</feature>
<sequence length="608" mass="69280">MSGPLDRFTSPCFSNNGEKREKKSDFEVSEDEKKTRIGGILKKKSSKSKFRHSLKRRGSRSIDRTLSLTFEDIHDAEELRYVSEFRQSLISDHLLPPNLDDYHIMLRFLFARKFDLGKAKLMWTNMIQWRRDFGTDTILEDFEFPELDEVLRYYPQGYHGVDKEGRPVYIERLGKVDASKLMQVTTLERYLRYHVKEFEKTITVKFPACCIAAKRHIDSSTTILDVQGLGLKNFTKTARDLIIQLQKIDSDNYPETLHRMFIINAGSGFKLLWGTVKSFLDPKTVSKIHVLGNKYQNKLLEMIDASQLPDFFGGTCTCADQGGCMRSDKGPWKDSEILKMGRSGGTFCRHAGAFLSSDSQISSSDKPTYSLKVSDTSTAKSGSELEEMASPKTNTNNHVPKLTPVSEYANGNISPTVLSEYEECVPMVDKVVDVAWQLQEMPNASEGPQYTSSLGKIGSVRHIWSWLTAFFISFFTLLASLALPQTKEHSQLHSSSVRAELCDERIARESRPPSPPRSTITERVIISSVLSRLGDLEKQIENLHSRKSEMPHEKEELLNAAVYRVDALEAELITTKKALHEALIRQEELLGYIDRQKEAKCRRKKFCW</sequence>
<dbReference type="EMBL" id="AC024609">
    <property type="protein sequence ID" value="AAF98408.1"/>
    <property type="status" value="ALT_SEQ"/>
    <property type="molecule type" value="Genomic_DNA"/>
</dbReference>
<dbReference type="EMBL" id="CP002684">
    <property type="protein sequence ID" value="AEE29877.1"/>
    <property type="molecule type" value="Genomic_DNA"/>
</dbReference>
<dbReference type="EMBL" id="AY056251">
    <property type="protein sequence ID" value="AAL07100.1"/>
    <property type="molecule type" value="mRNA"/>
</dbReference>
<dbReference type="EMBL" id="AK222017">
    <property type="protein sequence ID" value="BAD94680.1"/>
    <property type="molecule type" value="mRNA"/>
</dbReference>
<dbReference type="PIR" id="C86329">
    <property type="entry name" value="C86329"/>
</dbReference>
<dbReference type="RefSeq" id="NP_564092.1">
    <molecule id="F4HP88-1"/>
    <property type="nucleotide sequence ID" value="NM_101821.4"/>
</dbReference>
<dbReference type="SMR" id="F4HP88"/>
<dbReference type="BioGRID" id="23791">
    <property type="interactions" value="1"/>
</dbReference>
<dbReference type="FunCoup" id="F4HP88">
    <property type="interactions" value="72"/>
</dbReference>
<dbReference type="STRING" id="3702.F4HP88"/>
<dbReference type="iPTMnet" id="F4HP88"/>
<dbReference type="PaxDb" id="3702-AT1G19650.1"/>
<dbReference type="EnsemblPlants" id="AT1G19650.1">
    <molecule id="F4HP88-1"/>
    <property type="protein sequence ID" value="AT1G19650.1"/>
    <property type="gene ID" value="AT1G19650"/>
</dbReference>
<dbReference type="GeneID" id="838552"/>
<dbReference type="Gramene" id="AT1G19650.1">
    <molecule id="F4HP88-1"/>
    <property type="protein sequence ID" value="AT1G19650.1"/>
    <property type="gene ID" value="AT1G19650"/>
</dbReference>
<dbReference type="KEGG" id="ath:AT1G19650"/>
<dbReference type="Araport" id="AT1G19650"/>
<dbReference type="TAIR" id="AT1G19650"/>
<dbReference type="eggNOG" id="KOG1471">
    <property type="taxonomic scope" value="Eukaryota"/>
</dbReference>
<dbReference type="HOGENOM" id="CLU_014001_11_1_1"/>
<dbReference type="InParanoid" id="F4HP88"/>
<dbReference type="OMA" id="GEAQCFR"/>
<dbReference type="PRO" id="PR:F4HP88"/>
<dbReference type="Proteomes" id="UP000006548">
    <property type="component" value="Chromosome 1"/>
</dbReference>
<dbReference type="ExpressionAtlas" id="F4HP88">
    <property type="expression patterns" value="baseline and differential"/>
</dbReference>
<dbReference type="GO" id="GO:0000139">
    <property type="term" value="C:Golgi membrane"/>
    <property type="evidence" value="ECO:0007669"/>
    <property type="project" value="UniProtKB-SubCell"/>
</dbReference>
<dbReference type="GO" id="GO:0005886">
    <property type="term" value="C:plasma membrane"/>
    <property type="evidence" value="ECO:0007669"/>
    <property type="project" value="UniProtKB-SubCell"/>
</dbReference>
<dbReference type="GO" id="GO:0015031">
    <property type="term" value="P:protein transport"/>
    <property type="evidence" value="ECO:0007669"/>
    <property type="project" value="UniProtKB-KW"/>
</dbReference>
<dbReference type="CDD" id="cd00170">
    <property type="entry name" value="SEC14"/>
    <property type="match status" value="1"/>
</dbReference>
<dbReference type="FunFam" id="3.40.525.10:FF:000011">
    <property type="entry name" value="SEC14 cytosolic factor"/>
    <property type="match status" value="1"/>
</dbReference>
<dbReference type="Gene3D" id="3.40.525.10">
    <property type="entry name" value="CRAL-TRIO lipid binding domain"/>
    <property type="match status" value="1"/>
</dbReference>
<dbReference type="Gene3D" id="1.10.8.20">
    <property type="entry name" value="N-terminal domain of phosphatidylinositol transfer protein sec14p"/>
    <property type="match status" value="1"/>
</dbReference>
<dbReference type="InterPro" id="IPR001251">
    <property type="entry name" value="CRAL-TRIO_dom"/>
</dbReference>
<dbReference type="InterPro" id="IPR036865">
    <property type="entry name" value="CRAL-TRIO_dom_sf"/>
</dbReference>
<dbReference type="InterPro" id="IPR011074">
    <property type="entry name" value="CRAL/TRIO_N_dom"/>
</dbReference>
<dbReference type="InterPro" id="IPR036273">
    <property type="entry name" value="CRAL/TRIO_N_dom_sf"/>
</dbReference>
<dbReference type="InterPro" id="IPR051026">
    <property type="entry name" value="PI/PC_transfer"/>
</dbReference>
<dbReference type="PANTHER" id="PTHR45657">
    <property type="entry name" value="CRAL-TRIO DOMAIN-CONTAINING PROTEIN YKL091C-RELATED"/>
    <property type="match status" value="1"/>
</dbReference>
<dbReference type="PANTHER" id="PTHR45657:SF18">
    <property type="entry name" value="PHOSPHATIDYLINOSITOL_PHOSPHATIDYLCHOLINE TRANSFER PROTEIN SFH4"/>
    <property type="match status" value="1"/>
</dbReference>
<dbReference type="Pfam" id="PF00650">
    <property type="entry name" value="CRAL_TRIO"/>
    <property type="match status" value="1"/>
</dbReference>
<dbReference type="PRINTS" id="PR00180">
    <property type="entry name" value="CRETINALDHBP"/>
</dbReference>
<dbReference type="SMART" id="SM01100">
    <property type="entry name" value="CRAL_TRIO_N"/>
    <property type="match status" value="1"/>
</dbReference>
<dbReference type="SMART" id="SM00516">
    <property type="entry name" value="SEC14"/>
    <property type="match status" value="1"/>
</dbReference>
<dbReference type="SUPFAM" id="SSF52087">
    <property type="entry name" value="CRAL/TRIO domain"/>
    <property type="match status" value="1"/>
</dbReference>
<dbReference type="SUPFAM" id="SSF46938">
    <property type="entry name" value="CRAL/TRIO N-terminal domain"/>
    <property type="match status" value="1"/>
</dbReference>
<dbReference type="PROSITE" id="PS50191">
    <property type="entry name" value="CRAL_TRIO"/>
    <property type="match status" value="1"/>
</dbReference>